<comment type="function">
    <text evidence="1 2">Kinesin family member that is involved in spindle formation and the movements of chromosomes during mitosis and meiosis. Binds to microtubules and to DNA. Plays a role in congression of laterally attached chromosomes in NDC80-depleted cells.</text>
</comment>
<comment type="subunit">
    <text evidence="1">Interacts with FAM83D and SIAH1.</text>
</comment>
<comment type="subcellular location">
    <subcellularLocation>
        <location evidence="1">Nucleus</location>
    </subcellularLocation>
    <subcellularLocation>
        <location evidence="6">Cytoplasm</location>
        <location evidence="6">Cytoskeleton</location>
    </subcellularLocation>
</comment>
<comment type="PTM">
    <text evidence="1">Ubiquitinated; mediated by SIAH1 and leading to its subsequent proteasomal degradation.</text>
</comment>
<comment type="similarity">
    <text evidence="4">Belongs to the TRAFAC class myosin-kinesin ATPase superfamily. Kinesin family.</text>
</comment>
<gene>
    <name type="primary">Kif22</name>
</gene>
<proteinExistence type="evidence at transcript level"/>
<organism>
    <name type="scientific">Rattus norvegicus</name>
    <name type="common">Rat</name>
    <dbReference type="NCBI Taxonomy" id="10116"/>
    <lineage>
        <taxon>Eukaryota</taxon>
        <taxon>Metazoa</taxon>
        <taxon>Chordata</taxon>
        <taxon>Craniata</taxon>
        <taxon>Vertebrata</taxon>
        <taxon>Euteleostomi</taxon>
        <taxon>Mammalia</taxon>
        <taxon>Eutheria</taxon>
        <taxon>Euarchontoglires</taxon>
        <taxon>Glires</taxon>
        <taxon>Rodentia</taxon>
        <taxon>Myomorpha</taxon>
        <taxon>Muroidea</taxon>
        <taxon>Muridae</taxon>
        <taxon>Murinae</taxon>
        <taxon>Rattus</taxon>
    </lineage>
</organism>
<dbReference type="EMBL" id="BC088421">
    <property type="protein sequence ID" value="AAH88421.1"/>
    <property type="molecule type" value="mRNA"/>
</dbReference>
<dbReference type="RefSeq" id="NP_001009645.1">
    <property type="nucleotide sequence ID" value="NM_001009645.1"/>
</dbReference>
<dbReference type="SMR" id="Q5I0E8"/>
<dbReference type="BioGRID" id="254299">
    <property type="interactions" value="1"/>
</dbReference>
<dbReference type="FunCoup" id="Q5I0E8">
    <property type="interactions" value="1194"/>
</dbReference>
<dbReference type="STRING" id="10116.ENSRNOP00000027525"/>
<dbReference type="GlyGen" id="Q5I0E8">
    <property type="glycosylation" value="1 site"/>
</dbReference>
<dbReference type="PhosphoSitePlus" id="Q5I0E8"/>
<dbReference type="PaxDb" id="10116-ENSRNOP00000064910"/>
<dbReference type="Ensembl" id="ENSRNOT00000114752.1">
    <property type="protein sequence ID" value="ENSRNOP00000078862.1"/>
    <property type="gene ID" value="ENSRNOG00000020281.7"/>
</dbReference>
<dbReference type="GeneID" id="293502"/>
<dbReference type="KEGG" id="rno:293502"/>
<dbReference type="UCSC" id="RGD:1311886">
    <property type="organism name" value="rat"/>
</dbReference>
<dbReference type="AGR" id="RGD:1311886"/>
<dbReference type="CTD" id="3835"/>
<dbReference type="RGD" id="1311886">
    <property type="gene designation" value="Kif22"/>
</dbReference>
<dbReference type="eggNOG" id="KOG0242">
    <property type="taxonomic scope" value="Eukaryota"/>
</dbReference>
<dbReference type="GeneTree" id="ENSGT00940000159632"/>
<dbReference type="HOGENOM" id="CLU_001485_27_1_1"/>
<dbReference type="InParanoid" id="Q5I0E8"/>
<dbReference type="OrthoDB" id="58750at9989"/>
<dbReference type="PhylomeDB" id="Q5I0E8"/>
<dbReference type="TreeFam" id="TF105233"/>
<dbReference type="Reactome" id="R-RNO-2132295">
    <property type="pathway name" value="MHC class II antigen presentation"/>
</dbReference>
<dbReference type="Reactome" id="R-RNO-6811434">
    <property type="pathway name" value="COPI-dependent Golgi-to-ER retrograde traffic"/>
</dbReference>
<dbReference type="Reactome" id="R-RNO-983189">
    <property type="pathway name" value="Kinesins"/>
</dbReference>
<dbReference type="PRO" id="PR:Q5I0E8"/>
<dbReference type="Proteomes" id="UP000002494">
    <property type="component" value="Chromosome 1"/>
</dbReference>
<dbReference type="Bgee" id="ENSRNOG00000020281">
    <property type="expression patterns" value="Expressed in thymus and 18 other cell types or tissues"/>
</dbReference>
<dbReference type="GO" id="GO:0000785">
    <property type="term" value="C:chromatin"/>
    <property type="evidence" value="ECO:0000266"/>
    <property type="project" value="RGD"/>
</dbReference>
<dbReference type="GO" id="GO:0005737">
    <property type="term" value="C:cytoplasm"/>
    <property type="evidence" value="ECO:0000318"/>
    <property type="project" value="GO_Central"/>
</dbReference>
<dbReference type="GO" id="GO:0005829">
    <property type="term" value="C:cytosol"/>
    <property type="evidence" value="ECO:0007669"/>
    <property type="project" value="Ensembl"/>
</dbReference>
<dbReference type="GO" id="GO:0005871">
    <property type="term" value="C:kinesin complex"/>
    <property type="evidence" value="ECO:0000318"/>
    <property type="project" value="GO_Central"/>
</dbReference>
<dbReference type="GO" id="GO:0005874">
    <property type="term" value="C:microtubule"/>
    <property type="evidence" value="ECO:0000318"/>
    <property type="project" value="GO_Central"/>
</dbReference>
<dbReference type="GO" id="GO:0072686">
    <property type="term" value="C:mitotic spindle"/>
    <property type="evidence" value="ECO:0000266"/>
    <property type="project" value="RGD"/>
</dbReference>
<dbReference type="GO" id="GO:0016607">
    <property type="term" value="C:nuclear speck"/>
    <property type="evidence" value="ECO:0007669"/>
    <property type="project" value="Ensembl"/>
</dbReference>
<dbReference type="GO" id="GO:0005819">
    <property type="term" value="C:spindle"/>
    <property type="evidence" value="ECO:0000266"/>
    <property type="project" value="RGD"/>
</dbReference>
<dbReference type="GO" id="GO:0005524">
    <property type="term" value="F:ATP binding"/>
    <property type="evidence" value="ECO:0007669"/>
    <property type="project" value="UniProtKB-KW"/>
</dbReference>
<dbReference type="GO" id="GO:0016887">
    <property type="term" value="F:ATP hydrolysis activity"/>
    <property type="evidence" value="ECO:0000318"/>
    <property type="project" value="GO_Central"/>
</dbReference>
<dbReference type="GO" id="GO:0003677">
    <property type="term" value="F:DNA binding"/>
    <property type="evidence" value="ECO:0007669"/>
    <property type="project" value="UniProtKB-KW"/>
</dbReference>
<dbReference type="GO" id="GO:0008017">
    <property type="term" value="F:microtubule binding"/>
    <property type="evidence" value="ECO:0000318"/>
    <property type="project" value="GO_Central"/>
</dbReference>
<dbReference type="GO" id="GO:0003777">
    <property type="term" value="F:microtubule motor activity"/>
    <property type="evidence" value="ECO:0000318"/>
    <property type="project" value="GO_Central"/>
</dbReference>
<dbReference type="GO" id="GO:0006281">
    <property type="term" value="P:DNA repair"/>
    <property type="evidence" value="ECO:0007669"/>
    <property type="project" value="InterPro"/>
</dbReference>
<dbReference type="GO" id="GO:0051310">
    <property type="term" value="P:metaphase chromosome alignment"/>
    <property type="evidence" value="ECO:0000250"/>
    <property type="project" value="UniProtKB"/>
</dbReference>
<dbReference type="GO" id="GO:0007018">
    <property type="term" value="P:microtubule-based movement"/>
    <property type="evidence" value="ECO:0000318"/>
    <property type="project" value="GO_Central"/>
</dbReference>
<dbReference type="GO" id="GO:0007080">
    <property type="term" value="P:mitotic metaphase chromosome alignment"/>
    <property type="evidence" value="ECO:0000250"/>
    <property type="project" value="UniProtKB"/>
</dbReference>
<dbReference type="GO" id="GO:0007062">
    <property type="term" value="P:sister chromatid cohesion"/>
    <property type="evidence" value="ECO:0000250"/>
    <property type="project" value="UniProtKB"/>
</dbReference>
<dbReference type="CDD" id="cd01376">
    <property type="entry name" value="KISc_KID_like"/>
    <property type="match status" value="1"/>
</dbReference>
<dbReference type="FunFam" id="1.10.150.280:FF:000002">
    <property type="entry name" value="Kinesin-like protein"/>
    <property type="match status" value="1"/>
</dbReference>
<dbReference type="FunFam" id="3.40.850.10:FF:000043">
    <property type="entry name" value="Kinesin-like protein"/>
    <property type="match status" value="1"/>
</dbReference>
<dbReference type="Gene3D" id="1.10.150.280">
    <property type="entry name" value="AF1531-like domain"/>
    <property type="match status" value="1"/>
</dbReference>
<dbReference type="Gene3D" id="3.40.850.10">
    <property type="entry name" value="Kinesin motor domain"/>
    <property type="match status" value="1"/>
</dbReference>
<dbReference type="InterPro" id="IPR003583">
    <property type="entry name" value="Hlx-hairpin-Hlx_DNA-bd_motif"/>
</dbReference>
<dbReference type="InterPro" id="IPR027640">
    <property type="entry name" value="Kinesin-like_fam"/>
</dbReference>
<dbReference type="InterPro" id="IPR019821">
    <property type="entry name" value="Kinesin_motor_CS"/>
</dbReference>
<dbReference type="InterPro" id="IPR001752">
    <property type="entry name" value="Kinesin_motor_dom"/>
</dbReference>
<dbReference type="InterPro" id="IPR036961">
    <property type="entry name" value="Kinesin_motor_dom_sf"/>
</dbReference>
<dbReference type="InterPro" id="IPR027417">
    <property type="entry name" value="P-loop_NTPase"/>
</dbReference>
<dbReference type="InterPro" id="IPR010994">
    <property type="entry name" value="RuvA_2-like"/>
</dbReference>
<dbReference type="PANTHER" id="PTHR47969">
    <property type="entry name" value="CHROMOSOME-ASSOCIATED KINESIN KIF4A-RELATED"/>
    <property type="match status" value="1"/>
</dbReference>
<dbReference type="PANTHER" id="PTHR47969:SF9">
    <property type="entry name" value="KINESIN-LIKE PROTEIN"/>
    <property type="match status" value="1"/>
</dbReference>
<dbReference type="Pfam" id="PF12836">
    <property type="entry name" value="HHH_3"/>
    <property type="match status" value="1"/>
</dbReference>
<dbReference type="Pfam" id="PF00225">
    <property type="entry name" value="Kinesin"/>
    <property type="match status" value="1"/>
</dbReference>
<dbReference type="PRINTS" id="PR00380">
    <property type="entry name" value="KINESINHEAVY"/>
</dbReference>
<dbReference type="SMART" id="SM00278">
    <property type="entry name" value="HhH1"/>
    <property type="match status" value="2"/>
</dbReference>
<dbReference type="SMART" id="SM00129">
    <property type="entry name" value="KISc"/>
    <property type="match status" value="1"/>
</dbReference>
<dbReference type="SUPFAM" id="SSF52540">
    <property type="entry name" value="P-loop containing nucleoside triphosphate hydrolases"/>
    <property type="match status" value="1"/>
</dbReference>
<dbReference type="SUPFAM" id="SSF47781">
    <property type="entry name" value="RuvA domain 2-like"/>
    <property type="match status" value="1"/>
</dbReference>
<dbReference type="PROSITE" id="PS00411">
    <property type="entry name" value="KINESIN_MOTOR_1"/>
    <property type="match status" value="1"/>
</dbReference>
<dbReference type="PROSITE" id="PS50067">
    <property type="entry name" value="KINESIN_MOTOR_2"/>
    <property type="match status" value="1"/>
</dbReference>
<sequence length="657" mass="73056">MNVRAKKKPQQREMASASSGPSRSLSKGGVSRRPPLARVRVAVRLRPFMDEAKEPPCVRGIDSCSLEVANWRKYQETLKYQFDAFYGEKSTQQDVYVGSVQPILRHLLEGQNASVLAYGPTGAGKTHTMLGSPEQPGVIPRALMDLLQLTREESAEGRPWDISVAMSYLEIYQEKVLDLLDPASGDLVIREDCRGNILIPGLTQKPITSFSEFEQHFLPASRNRVVGATRLNQRSSRSHAVLLVKVEQRERLTPFRQREGKLYLIDLAGSEDNRRTGNQGIRLKESGAINTSLFVLGKVVDALNQGLPRIPYRDSKLTRLLQDSLGGSAHSILIANIAPERRFYQDTISALNFTARSKEVINRPFTNESLQPHALAPVKLPQKELLGPSEAKKAKGPEEESTGSPESTAAPASASQKLSLLQKLSNMDPAMLENLLSMERLLGSQGSQGIPLLNTPKRERMVLIKTVEEKNLEIERLKMKQKELEAKVLAQEALDPKEKENTPTILQPSSSCSGSVAKPLKKAVVMPLQRIQKQSESSNKIHLLKKGHKRKLESSHESEAVEKDEDYWEIQISPELLARGRKKLLHLLNEGSARDLRSLQRIGQKKAQLIVGWRELHGPFNEVEDLEQVEGISGKQVESFLKANLLSLAASQHSGPS</sequence>
<keyword id="KW-0067">ATP-binding</keyword>
<keyword id="KW-0175">Coiled coil</keyword>
<keyword id="KW-0963">Cytoplasm</keyword>
<keyword id="KW-0206">Cytoskeleton</keyword>
<keyword id="KW-0238">DNA-binding</keyword>
<keyword id="KW-1017">Isopeptide bond</keyword>
<keyword id="KW-0493">Microtubule</keyword>
<keyword id="KW-0505">Motor protein</keyword>
<keyword id="KW-0547">Nucleotide-binding</keyword>
<keyword id="KW-0539">Nucleus</keyword>
<keyword id="KW-0597">Phosphoprotein</keyword>
<keyword id="KW-1185">Reference proteome</keyword>
<keyword id="KW-0832">Ubl conjugation</keyword>
<evidence type="ECO:0000250" key="1">
    <source>
        <dbReference type="UniProtKB" id="Q14807"/>
    </source>
</evidence>
<evidence type="ECO:0000250" key="2">
    <source>
        <dbReference type="UniProtKB" id="Q9I869"/>
    </source>
</evidence>
<evidence type="ECO:0000255" key="3"/>
<evidence type="ECO:0000255" key="4">
    <source>
        <dbReference type="PROSITE-ProRule" id="PRU00283"/>
    </source>
</evidence>
<evidence type="ECO:0000256" key="5">
    <source>
        <dbReference type="SAM" id="MobiDB-lite"/>
    </source>
</evidence>
<evidence type="ECO:0000305" key="6"/>
<reference key="1">
    <citation type="journal article" date="2004" name="Genome Res.">
        <title>The status, quality, and expansion of the NIH full-length cDNA project: the Mammalian Gene Collection (MGC).</title>
        <authorList>
            <consortium name="The MGC Project Team"/>
        </authorList>
    </citation>
    <scope>NUCLEOTIDE SEQUENCE [LARGE SCALE MRNA]</scope>
    <source>
        <tissue>Lung</tissue>
    </source>
</reference>
<feature type="chain" id="PRO_0000262923" description="Kinesin-like protein KIF22">
    <location>
        <begin position="1"/>
        <end position="657"/>
    </location>
</feature>
<feature type="domain" description="Kinesin motor" evidence="4">
    <location>
        <begin position="38"/>
        <end position="360"/>
    </location>
</feature>
<feature type="region of interest" description="Disordered" evidence="5">
    <location>
        <begin position="1"/>
        <end position="33"/>
    </location>
</feature>
<feature type="region of interest" description="Disordered" evidence="5">
    <location>
        <begin position="388"/>
        <end position="415"/>
    </location>
</feature>
<feature type="coiled-coil region" evidence="3">
    <location>
        <begin position="457"/>
        <end position="502"/>
    </location>
</feature>
<feature type="compositionally biased region" description="Low complexity" evidence="5">
    <location>
        <begin position="16"/>
        <end position="33"/>
    </location>
</feature>
<feature type="compositionally biased region" description="Low complexity" evidence="5">
    <location>
        <begin position="402"/>
        <end position="415"/>
    </location>
</feature>
<feature type="binding site" evidence="4">
    <location>
        <begin position="119"/>
        <end position="126"/>
    </location>
    <ligand>
        <name>ATP</name>
        <dbReference type="ChEBI" id="CHEBI:30616"/>
    </ligand>
</feature>
<feature type="modified residue" description="Phosphoserine" evidence="1">
    <location>
        <position position="404"/>
    </location>
</feature>
<feature type="modified residue" description="Phosphoserine" evidence="1">
    <location>
        <position position="419"/>
    </location>
</feature>
<feature type="modified residue" description="Phosphoserine" evidence="1">
    <location>
        <position position="444"/>
    </location>
</feature>
<feature type="modified residue" description="Phosphoserine" evidence="1">
    <location>
        <position position="537"/>
    </location>
</feature>
<feature type="modified residue" description="Phosphoserine" evidence="1">
    <location>
        <position position="554"/>
    </location>
</feature>
<feature type="modified residue" description="Phosphoserine" evidence="1">
    <location>
        <position position="573"/>
    </location>
</feature>
<feature type="cross-link" description="Glycyl lysine isopeptide (Lys-Gly) (interchain with G-Cter in SUMO2)" evidence="1">
    <location>
        <position position="457"/>
    </location>
</feature>
<name>KIF22_RAT</name>
<protein>
    <recommendedName>
        <fullName>Kinesin-like protein KIF22</fullName>
    </recommendedName>
</protein>
<accession>Q5I0E8</accession>